<gene>
    <name evidence="1" type="primary">rpsT</name>
    <name type="ordered locus">ECIAI39_0025</name>
</gene>
<accession>B7NHC8</accession>
<organism>
    <name type="scientific">Escherichia coli O7:K1 (strain IAI39 / ExPEC)</name>
    <dbReference type="NCBI Taxonomy" id="585057"/>
    <lineage>
        <taxon>Bacteria</taxon>
        <taxon>Pseudomonadati</taxon>
        <taxon>Pseudomonadota</taxon>
        <taxon>Gammaproteobacteria</taxon>
        <taxon>Enterobacterales</taxon>
        <taxon>Enterobacteriaceae</taxon>
        <taxon>Escherichia</taxon>
    </lineage>
</organism>
<name>RS20_ECO7I</name>
<keyword id="KW-0687">Ribonucleoprotein</keyword>
<keyword id="KW-0689">Ribosomal protein</keyword>
<keyword id="KW-0694">RNA-binding</keyword>
<keyword id="KW-0699">rRNA-binding</keyword>
<protein>
    <recommendedName>
        <fullName evidence="1">Small ribosomal subunit protein bS20</fullName>
    </recommendedName>
    <alternativeName>
        <fullName evidence="3">30S ribosomal protein S20</fullName>
    </alternativeName>
</protein>
<reference key="1">
    <citation type="journal article" date="2009" name="PLoS Genet.">
        <title>Organised genome dynamics in the Escherichia coli species results in highly diverse adaptive paths.</title>
        <authorList>
            <person name="Touchon M."/>
            <person name="Hoede C."/>
            <person name="Tenaillon O."/>
            <person name="Barbe V."/>
            <person name="Baeriswyl S."/>
            <person name="Bidet P."/>
            <person name="Bingen E."/>
            <person name="Bonacorsi S."/>
            <person name="Bouchier C."/>
            <person name="Bouvet O."/>
            <person name="Calteau A."/>
            <person name="Chiapello H."/>
            <person name="Clermont O."/>
            <person name="Cruveiller S."/>
            <person name="Danchin A."/>
            <person name="Diard M."/>
            <person name="Dossat C."/>
            <person name="Karoui M.E."/>
            <person name="Frapy E."/>
            <person name="Garry L."/>
            <person name="Ghigo J.M."/>
            <person name="Gilles A.M."/>
            <person name="Johnson J."/>
            <person name="Le Bouguenec C."/>
            <person name="Lescat M."/>
            <person name="Mangenot S."/>
            <person name="Martinez-Jehanne V."/>
            <person name="Matic I."/>
            <person name="Nassif X."/>
            <person name="Oztas S."/>
            <person name="Petit M.A."/>
            <person name="Pichon C."/>
            <person name="Rouy Z."/>
            <person name="Ruf C.S."/>
            <person name="Schneider D."/>
            <person name="Tourret J."/>
            <person name="Vacherie B."/>
            <person name="Vallenet D."/>
            <person name="Medigue C."/>
            <person name="Rocha E.P.C."/>
            <person name="Denamur E."/>
        </authorList>
    </citation>
    <scope>NUCLEOTIDE SEQUENCE [LARGE SCALE GENOMIC DNA]</scope>
    <source>
        <strain>IAI39 / ExPEC</strain>
    </source>
</reference>
<evidence type="ECO:0000255" key="1">
    <source>
        <dbReference type="HAMAP-Rule" id="MF_00500"/>
    </source>
</evidence>
<evidence type="ECO:0000256" key="2">
    <source>
        <dbReference type="SAM" id="MobiDB-lite"/>
    </source>
</evidence>
<evidence type="ECO:0000305" key="3"/>
<dbReference type="EMBL" id="CU928164">
    <property type="protein sequence ID" value="CAR16166.1"/>
    <property type="molecule type" value="Genomic_DNA"/>
</dbReference>
<dbReference type="RefSeq" id="WP_001274021.1">
    <property type="nucleotide sequence ID" value="NC_011750.1"/>
</dbReference>
<dbReference type="RefSeq" id="YP_002406073.1">
    <property type="nucleotide sequence ID" value="NC_011750.1"/>
</dbReference>
<dbReference type="SMR" id="B7NHC8"/>
<dbReference type="STRING" id="585057.ECIAI39_0025"/>
<dbReference type="GeneID" id="93777413"/>
<dbReference type="KEGG" id="ect:ECIAI39_0025"/>
<dbReference type="PATRIC" id="fig|585057.6.peg.25"/>
<dbReference type="HOGENOM" id="CLU_160655_4_0_6"/>
<dbReference type="Proteomes" id="UP000000749">
    <property type="component" value="Chromosome"/>
</dbReference>
<dbReference type="GO" id="GO:0005829">
    <property type="term" value="C:cytosol"/>
    <property type="evidence" value="ECO:0007669"/>
    <property type="project" value="TreeGrafter"/>
</dbReference>
<dbReference type="GO" id="GO:0015935">
    <property type="term" value="C:small ribosomal subunit"/>
    <property type="evidence" value="ECO:0007669"/>
    <property type="project" value="TreeGrafter"/>
</dbReference>
<dbReference type="GO" id="GO:0070181">
    <property type="term" value="F:small ribosomal subunit rRNA binding"/>
    <property type="evidence" value="ECO:0007669"/>
    <property type="project" value="TreeGrafter"/>
</dbReference>
<dbReference type="GO" id="GO:0003735">
    <property type="term" value="F:structural constituent of ribosome"/>
    <property type="evidence" value="ECO:0007669"/>
    <property type="project" value="InterPro"/>
</dbReference>
<dbReference type="GO" id="GO:0006412">
    <property type="term" value="P:translation"/>
    <property type="evidence" value="ECO:0007669"/>
    <property type="project" value="UniProtKB-UniRule"/>
</dbReference>
<dbReference type="FunFam" id="1.20.58.110:FF:000001">
    <property type="entry name" value="30S ribosomal protein S20"/>
    <property type="match status" value="1"/>
</dbReference>
<dbReference type="Gene3D" id="1.20.58.110">
    <property type="entry name" value="Ribosomal protein S20"/>
    <property type="match status" value="1"/>
</dbReference>
<dbReference type="HAMAP" id="MF_00500">
    <property type="entry name" value="Ribosomal_bS20"/>
    <property type="match status" value="1"/>
</dbReference>
<dbReference type="InterPro" id="IPR002583">
    <property type="entry name" value="Ribosomal_bS20"/>
</dbReference>
<dbReference type="InterPro" id="IPR036510">
    <property type="entry name" value="Ribosomal_bS20_sf"/>
</dbReference>
<dbReference type="NCBIfam" id="TIGR00029">
    <property type="entry name" value="S20"/>
    <property type="match status" value="1"/>
</dbReference>
<dbReference type="PANTHER" id="PTHR33398">
    <property type="entry name" value="30S RIBOSOMAL PROTEIN S20"/>
    <property type="match status" value="1"/>
</dbReference>
<dbReference type="PANTHER" id="PTHR33398:SF1">
    <property type="entry name" value="SMALL RIBOSOMAL SUBUNIT PROTEIN BS20C"/>
    <property type="match status" value="1"/>
</dbReference>
<dbReference type="Pfam" id="PF01649">
    <property type="entry name" value="Ribosomal_S20p"/>
    <property type="match status" value="1"/>
</dbReference>
<dbReference type="SUPFAM" id="SSF46992">
    <property type="entry name" value="Ribosomal protein S20"/>
    <property type="match status" value="1"/>
</dbReference>
<sequence>MANIKSAKKRAIQSEKARKHNASRRSMMRTFIKKVYAAIEAGDKAAAQKAFNEMQPIVDRQAAKGLIHKNKAARHKANLTAQINKLA</sequence>
<feature type="chain" id="PRO_1000126440" description="Small ribosomal subunit protein bS20">
    <location>
        <begin position="1"/>
        <end position="87"/>
    </location>
</feature>
<feature type="region of interest" description="Disordered" evidence="2">
    <location>
        <begin position="1"/>
        <end position="26"/>
    </location>
</feature>
<proteinExistence type="inferred from homology"/>
<comment type="function">
    <text evidence="1">Binds directly to 16S ribosomal RNA.</text>
</comment>
<comment type="similarity">
    <text evidence="1">Belongs to the bacterial ribosomal protein bS20 family.</text>
</comment>